<proteinExistence type="evidence at protein level"/>
<name>METH_MOUSE</name>
<feature type="chain" id="PRO_0000312901" description="Methionine synthase">
    <location>
        <begin position="1"/>
        <end position="1253"/>
    </location>
</feature>
<feature type="domain" description="Hcy-binding" evidence="4">
    <location>
        <begin position="6"/>
        <end position="326"/>
    </location>
</feature>
<feature type="domain" description="Pterin-binding" evidence="5">
    <location>
        <begin position="359"/>
        <end position="620"/>
    </location>
</feature>
<feature type="domain" description="B12-binding N-terminal" evidence="8">
    <location>
        <begin position="650"/>
        <end position="747"/>
    </location>
</feature>
<feature type="domain" description="B12-binding" evidence="7">
    <location>
        <begin position="760"/>
        <end position="895"/>
    </location>
</feature>
<feature type="domain" description="AdoMet activation" evidence="6">
    <location>
        <begin position="911"/>
        <end position="1253"/>
    </location>
</feature>
<feature type="binding site" evidence="4">
    <location>
        <position position="248"/>
    </location>
    <ligand>
        <name>Zn(2+)</name>
        <dbReference type="ChEBI" id="CHEBI:29105"/>
    </ligand>
</feature>
<feature type="binding site" evidence="4">
    <location>
        <position position="311"/>
    </location>
    <ligand>
        <name>Zn(2+)</name>
        <dbReference type="ChEBI" id="CHEBI:29105"/>
    </ligand>
</feature>
<feature type="binding site" evidence="4">
    <location>
        <position position="312"/>
    </location>
    <ligand>
        <name>Zn(2+)</name>
        <dbReference type="ChEBI" id="CHEBI:29105"/>
    </ligand>
</feature>
<feature type="binding site" evidence="2">
    <location>
        <begin position="370"/>
        <end position="372"/>
    </location>
    <ligand>
        <name>(6S)-5,6,7,8-tetrahydrofolate</name>
        <dbReference type="ChEBI" id="CHEBI:57453"/>
    </ligand>
</feature>
<feature type="binding site" evidence="2">
    <location>
        <position position="437"/>
    </location>
    <ligand>
        <name>(6S)-5,6,7,8-tetrahydrofolate</name>
        <dbReference type="ChEBI" id="CHEBI:57453"/>
    </ligand>
</feature>
<feature type="binding site" evidence="2">
    <location>
        <position position="458"/>
    </location>
    <ligand>
        <name>(6S)-5,6,7,8-tetrahydrofolate</name>
        <dbReference type="ChEBI" id="CHEBI:57453"/>
    </ligand>
</feature>
<feature type="binding site" evidence="2">
    <location>
        <position position="525"/>
    </location>
    <ligand>
        <name>(6S)-5,6,7,8-tetrahydrofolate</name>
        <dbReference type="ChEBI" id="CHEBI:57453"/>
    </ligand>
</feature>
<feature type="binding site" evidence="2">
    <location>
        <position position="567"/>
    </location>
    <ligand>
        <name>(6S)-5,6,7,8-tetrahydrofolate</name>
        <dbReference type="ChEBI" id="CHEBI:57453"/>
    </ligand>
</feature>
<feature type="binding site" evidence="2">
    <location>
        <position position="573"/>
    </location>
    <ligand>
        <name>(6S)-5,6,7,8-tetrahydrofolate</name>
        <dbReference type="ChEBI" id="CHEBI:57453"/>
    </ligand>
</feature>
<feature type="binding site" evidence="2">
    <location>
        <position position="579"/>
    </location>
    <ligand>
        <name>(6S)-5,6,7,8-tetrahydrofolate</name>
        <dbReference type="ChEBI" id="CHEBI:57453"/>
    </ligand>
</feature>
<feature type="binding site" evidence="1">
    <location>
        <position position="697"/>
    </location>
    <ligand>
        <name>methylcob(III)alamin</name>
        <dbReference type="ChEBI" id="CHEBI:28115"/>
    </ligand>
</feature>
<feature type="binding site" evidence="1">
    <location>
        <begin position="770"/>
        <end position="774"/>
    </location>
    <ligand>
        <name>methylcob(III)alamin</name>
        <dbReference type="ChEBI" id="CHEBI:28115"/>
    </ligand>
</feature>
<feature type="binding site" description="axial binding residue" evidence="1">
    <location>
        <position position="773"/>
    </location>
    <ligand>
        <name>methylcob(III)alamin</name>
        <dbReference type="ChEBI" id="CHEBI:28115"/>
    </ligand>
    <ligandPart>
        <name>Co</name>
        <dbReference type="ChEBI" id="CHEBI:27638"/>
    </ligandPart>
</feature>
<feature type="binding site" evidence="1">
    <location>
        <position position="818"/>
    </location>
    <ligand>
        <name>methylcob(III)alamin</name>
        <dbReference type="ChEBI" id="CHEBI:28115"/>
    </ligand>
</feature>
<feature type="binding site" evidence="1">
    <location>
        <position position="822"/>
    </location>
    <ligand>
        <name>methylcob(III)alamin</name>
        <dbReference type="ChEBI" id="CHEBI:28115"/>
    </ligand>
</feature>
<feature type="binding site" evidence="1">
    <location>
        <position position="874"/>
    </location>
    <ligand>
        <name>methylcob(III)alamin</name>
        <dbReference type="ChEBI" id="CHEBI:28115"/>
    </ligand>
</feature>
<feature type="binding site" evidence="1">
    <location>
        <position position="962"/>
    </location>
    <ligand>
        <name>S-adenosyl-L-methionine</name>
        <dbReference type="ChEBI" id="CHEBI:59789"/>
    </ligand>
</feature>
<feature type="binding site" evidence="1">
    <location>
        <position position="1160"/>
    </location>
    <ligand>
        <name>S-adenosyl-L-methionine</name>
        <dbReference type="ChEBI" id="CHEBI:59789"/>
    </ligand>
</feature>
<feature type="binding site" evidence="1">
    <location>
        <begin position="1215"/>
        <end position="1216"/>
    </location>
    <ligand>
        <name>S-adenosyl-L-methionine</name>
        <dbReference type="ChEBI" id="CHEBI:59789"/>
    </ligand>
</feature>
<feature type="modified residue" description="Phosphothreonine" evidence="3">
    <location>
        <position position="1252"/>
    </location>
</feature>
<feature type="sequence conflict" description="In Ref. 2; BAE24997." evidence="9" ref="2">
    <original>M</original>
    <variation>L</variation>
    <location>
        <position position="343"/>
    </location>
</feature>
<sequence>MKKTLQDEIEAILRKRIMVLDGGMGTMIQRYKLSEEHFQGQEFKDHSRPLKGNNDILSITQPDIIYQIHKEYLLAGADIIETNTFSSTSIAQADYGLEHLAYRMNKCSADVARKAAEEITLQTGVKRFVAGALGPTNKTLSVSPSVERPDYRNITFDELVDAYQEQAKGLLDGRVDILLIETIFDTANAKAALFAIQNLFEENYAPPRPIFISGTIVDKSGRTLSGQTGEAFVTSVSHSDPLCIGLNCSLGAAEMRPFIETIGKCTTAYVLCYPNAGLPNTFGDYDETPSTMATHLKDFAVDGLVNIVGGCCGSTPDHIREIAEAVKKCKPRVPPASVFEGHMLLSGLEPFRIGPYTNFVNIGERCNVAGSRKFAKLIMAGNYEEALSIAKAQVEMGAQVLDINMDDGMLDGPSAMTRFCNSIASEPDIAKVPLCIDSSNFAVIEAGLKCCQGKCIVNSISLKEGEGDFLEKARKIKKFGAAVVVMAFDEEGQATETDVKVNVCTRAYHLLVDKVGFNPNDIIFDPNILTIGTGMEEHNLYAINFIHATRVIKETLPGVRISGGLSNLSFSFRGMEAIREAMHGVFLYHAIKFGMDMGIVNAGNLPVYDAIHKDLLQLCEDLIWNKDSEATEKLLRYAQTHGTGGKKVIQTDEWRNGSIEERLEYALVKGIEKHIVEDTEEARLNGEKYPRPLNIIEGPLMNGMKVVGDLFGAGKMFLPQVIKSARVMKKAVGHLIPFMEKEREEARLINGSVEEEDPYQGTIVLATVKGDVHDIGKNIVGVVLACNNFRVIDLGVMTPCDKILQAALDHKADIIGLSGLITPSLDEMIFVAKEMERLAIKIPLLIGGATTSRTHTAVKIAPRYSAPVIHVLDASKSVVVCSQLLDENLRDDYFEEILEEYEDIRQDHYESLKERKYVPLSQARKHGFHIDWLSEPHPVKPTFIGTQVFEDYNLQKLVDYIDWKPFFDVWQLRGKYPNRGFPKIFNDKAVGEEARKVYNDAQNMLNILISQKKLQARGVVGFWPAQSVQDDIHLYAEGVVPQAAEPIATFYGLRQQAEKDSSSTDPYHCLSDFIAPLHSGVCDYLGLFAVACFGVEELSKTYEDDGDDYSSIMVKALGDRLAEAFAEELHERVRRELWAYSRSEQLGVPDLRRLRYEGIRPAPGYPSQPDHTEKLTMWRLASIEQATGIRLTESLAMAPASAVSGLYFSNVKAKYFAVGKISKDQTEDYALRKNMPVAEVEKWLGPILGYDTD</sequence>
<reference key="1">
    <citation type="journal article" date="2004" name="Genome Res.">
        <title>The status, quality, and expansion of the NIH full-length cDNA project: the Mammalian Gene Collection (MGC).</title>
        <authorList>
            <consortium name="The MGC Project Team"/>
        </authorList>
    </citation>
    <scope>NUCLEOTIDE SEQUENCE [LARGE SCALE MRNA]</scope>
    <source>
        <tissue>Brain</tissue>
    </source>
</reference>
<reference key="2">
    <citation type="journal article" date="2005" name="Science">
        <title>The transcriptional landscape of the mammalian genome.</title>
        <authorList>
            <person name="Carninci P."/>
            <person name="Kasukawa T."/>
            <person name="Katayama S."/>
            <person name="Gough J."/>
            <person name="Frith M.C."/>
            <person name="Maeda N."/>
            <person name="Oyama R."/>
            <person name="Ravasi T."/>
            <person name="Lenhard B."/>
            <person name="Wells C."/>
            <person name="Kodzius R."/>
            <person name="Shimokawa K."/>
            <person name="Bajic V.B."/>
            <person name="Brenner S.E."/>
            <person name="Batalov S."/>
            <person name="Forrest A.R."/>
            <person name="Zavolan M."/>
            <person name="Davis M.J."/>
            <person name="Wilming L.G."/>
            <person name="Aidinis V."/>
            <person name="Allen J.E."/>
            <person name="Ambesi-Impiombato A."/>
            <person name="Apweiler R."/>
            <person name="Aturaliya R.N."/>
            <person name="Bailey T.L."/>
            <person name="Bansal M."/>
            <person name="Baxter L."/>
            <person name="Beisel K.W."/>
            <person name="Bersano T."/>
            <person name="Bono H."/>
            <person name="Chalk A.M."/>
            <person name="Chiu K.P."/>
            <person name="Choudhary V."/>
            <person name="Christoffels A."/>
            <person name="Clutterbuck D.R."/>
            <person name="Crowe M.L."/>
            <person name="Dalla E."/>
            <person name="Dalrymple B.P."/>
            <person name="de Bono B."/>
            <person name="Della Gatta G."/>
            <person name="di Bernardo D."/>
            <person name="Down T."/>
            <person name="Engstrom P."/>
            <person name="Fagiolini M."/>
            <person name="Faulkner G."/>
            <person name="Fletcher C.F."/>
            <person name="Fukushima T."/>
            <person name="Furuno M."/>
            <person name="Futaki S."/>
            <person name="Gariboldi M."/>
            <person name="Georgii-Hemming P."/>
            <person name="Gingeras T.R."/>
            <person name="Gojobori T."/>
            <person name="Green R.E."/>
            <person name="Gustincich S."/>
            <person name="Harbers M."/>
            <person name="Hayashi Y."/>
            <person name="Hensch T.K."/>
            <person name="Hirokawa N."/>
            <person name="Hill D."/>
            <person name="Huminiecki L."/>
            <person name="Iacono M."/>
            <person name="Ikeo K."/>
            <person name="Iwama A."/>
            <person name="Ishikawa T."/>
            <person name="Jakt M."/>
            <person name="Kanapin A."/>
            <person name="Katoh M."/>
            <person name="Kawasawa Y."/>
            <person name="Kelso J."/>
            <person name="Kitamura H."/>
            <person name="Kitano H."/>
            <person name="Kollias G."/>
            <person name="Krishnan S.P."/>
            <person name="Kruger A."/>
            <person name="Kummerfeld S.K."/>
            <person name="Kurochkin I.V."/>
            <person name="Lareau L.F."/>
            <person name="Lazarevic D."/>
            <person name="Lipovich L."/>
            <person name="Liu J."/>
            <person name="Liuni S."/>
            <person name="McWilliam S."/>
            <person name="Madan Babu M."/>
            <person name="Madera M."/>
            <person name="Marchionni L."/>
            <person name="Matsuda H."/>
            <person name="Matsuzawa S."/>
            <person name="Miki H."/>
            <person name="Mignone F."/>
            <person name="Miyake S."/>
            <person name="Morris K."/>
            <person name="Mottagui-Tabar S."/>
            <person name="Mulder N."/>
            <person name="Nakano N."/>
            <person name="Nakauchi H."/>
            <person name="Ng P."/>
            <person name="Nilsson R."/>
            <person name="Nishiguchi S."/>
            <person name="Nishikawa S."/>
            <person name="Nori F."/>
            <person name="Ohara O."/>
            <person name="Okazaki Y."/>
            <person name="Orlando V."/>
            <person name="Pang K.C."/>
            <person name="Pavan W.J."/>
            <person name="Pavesi G."/>
            <person name="Pesole G."/>
            <person name="Petrovsky N."/>
            <person name="Piazza S."/>
            <person name="Reed J."/>
            <person name="Reid J.F."/>
            <person name="Ring B.Z."/>
            <person name="Ringwald M."/>
            <person name="Rost B."/>
            <person name="Ruan Y."/>
            <person name="Salzberg S.L."/>
            <person name="Sandelin A."/>
            <person name="Schneider C."/>
            <person name="Schoenbach C."/>
            <person name="Sekiguchi K."/>
            <person name="Semple C.A."/>
            <person name="Seno S."/>
            <person name="Sessa L."/>
            <person name="Sheng Y."/>
            <person name="Shibata Y."/>
            <person name="Shimada H."/>
            <person name="Shimada K."/>
            <person name="Silva D."/>
            <person name="Sinclair B."/>
            <person name="Sperling S."/>
            <person name="Stupka E."/>
            <person name="Sugiura K."/>
            <person name="Sultana R."/>
            <person name="Takenaka Y."/>
            <person name="Taki K."/>
            <person name="Tammoja K."/>
            <person name="Tan S.L."/>
            <person name="Tang S."/>
            <person name="Taylor M.S."/>
            <person name="Tegner J."/>
            <person name="Teichmann S.A."/>
            <person name="Ueda H.R."/>
            <person name="van Nimwegen E."/>
            <person name="Verardo R."/>
            <person name="Wei C.L."/>
            <person name="Yagi K."/>
            <person name="Yamanishi H."/>
            <person name="Zabarovsky E."/>
            <person name="Zhu S."/>
            <person name="Zimmer A."/>
            <person name="Hide W."/>
            <person name="Bult C."/>
            <person name="Grimmond S.M."/>
            <person name="Teasdale R.D."/>
            <person name="Liu E.T."/>
            <person name="Brusic V."/>
            <person name="Quackenbush J."/>
            <person name="Wahlestedt C."/>
            <person name="Mattick J.S."/>
            <person name="Hume D.A."/>
            <person name="Kai C."/>
            <person name="Sasaki D."/>
            <person name="Tomaru Y."/>
            <person name="Fukuda S."/>
            <person name="Kanamori-Katayama M."/>
            <person name="Suzuki M."/>
            <person name="Aoki J."/>
            <person name="Arakawa T."/>
            <person name="Iida J."/>
            <person name="Imamura K."/>
            <person name="Itoh M."/>
            <person name="Kato T."/>
            <person name="Kawaji H."/>
            <person name="Kawagashira N."/>
            <person name="Kawashima T."/>
            <person name="Kojima M."/>
            <person name="Kondo S."/>
            <person name="Konno H."/>
            <person name="Nakano K."/>
            <person name="Ninomiya N."/>
            <person name="Nishio T."/>
            <person name="Okada M."/>
            <person name="Plessy C."/>
            <person name="Shibata K."/>
            <person name="Shiraki T."/>
            <person name="Suzuki S."/>
            <person name="Tagami M."/>
            <person name="Waki K."/>
            <person name="Watahiki A."/>
            <person name="Okamura-Oho Y."/>
            <person name="Suzuki H."/>
            <person name="Kawai J."/>
            <person name="Hayashizaki Y."/>
        </authorList>
    </citation>
    <scope>NUCLEOTIDE SEQUENCE [LARGE SCALE MRNA] OF 1-738</scope>
    <source>
        <strain>C57BL/6J</strain>
        <tissue>Heart</tissue>
    </source>
</reference>
<reference key="3">
    <citation type="journal article" date="2010" name="Cell">
        <title>A tissue-specific atlas of mouse protein phosphorylation and expression.</title>
        <authorList>
            <person name="Huttlin E.L."/>
            <person name="Jedrychowski M.P."/>
            <person name="Elias J.E."/>
            <person name="Goswami T."/>
            <person name="Rad R."/>
            <person name="Beausoleil S.A."/>
            <person name="Villen J."/>
            <person name="Haas W."/>
            <person name="Sowa M.E."/>
            <person name="Gygi S.P."/>
        </authorList>
    </citation>
    <scope>IDENTIFICATION BY MASS SPECTROMETRY [LARGE SCALE ANALYSIS]</scope>
    <source>
        <tissue>Kidney</tissue>
        <tissue>Lung</tissue>
        <tissue>Pancreas</tissue>
        <tissue>Spleen</tissue>
        <tissue>Testis</tissue>
    </source>
</reference>
<gene>
    <name evidence="10" type="primary">Mtr</name>
</gene>
<organism>
    <name type="scientific">Mus musculus</name>
    <name type="common">Mouse</name>
    <dbReference type="NCBI Taxonomy" id="10090"/>
    <lineage>
        <taxon>Eukaryota</taxon>
        <taxon>Metazoa</taxon>
        <taxon>Chordata</taxon>
        <taxon>Craniata</taxon>
        <taxon>Vertebrata</taxon>
        <taxon>Euteleostomi</taxon>
        <taxon>Mammalia</taxon>
        <taxon>Eutheria</taxon>
        <taxon>Euarchontoglires</taxon>
        <taxon>Glires</taxon>
        <taxon>Rodentia</taxon>
        <taxon>Myomorpha</taxon>
        <taxon>Muroidea</taxon>
        <taxon>Muridae</taxon>
        <taxon>Murinae</taxon>
        <taxon>Mus</taxon>
        <taxon>Mus</taxon>
    </lineage>
</organism>
<dbReference type="EC" id="2.1.1.13" evidence="3"/>
<dbReference type="EMBL" id="BC145683">
    <property type="protein sequence ID" value="AAI45684.1"/>
    <property type="molecule type" value="mRNA"/>
</dbReference>
<dbReference type="EMBL" id="BC145685">
    <property type="protein sequence ID" value="AAI45686.1"/>
    <property type="molecule type" value="mRNA"/>
</dbReference>
<dbReference type="EMBL" id="AK142258">
    <property type="protein sequence ID" value="BAE24997.1"/>
    <property type="molecule type" value="mRNA"/>
</dbReference>
<dbReference type="CCDS" id="CCDS36591.1"/>
<dbReference type="RefSeq" id="NP_001074597.1">
    <property type="nucleotide sequence ID" value="NM_001081128.3"/>
</dbReference>
<dbReference type="SMR" id="A6H5Y3"/>
<dbReference type="BioGRID" id="231991">
    <property type="interactions" value="5"/>
</dbReference>
<dbReference type="FunCoup" id="A6H5Y3">
    <property type="interactions" value="693"/>
</dbReference>
<dbReference type="IntAct" id="A6H5Y3">
    <property type="interactions" value="1"/>
</dbReference>
<dbReference type="MINT" id="A6H5Y3"/>
<dbReference type="STRING" id="10090.ENSMUSP00000097442"/>
<dbReference type="ChEMBL" id="CHEMBL3188"/>
<dbReference type="GlyGen" id="A6H5Y3">
    <property type="glycosylation" value="2 sites, 2 N-linked glycans (2 sites)"/>
</dbReference>
<dbReference type="iPTMnet" id="A6H5Y3"/>
<dbReference type="PhosphoSitePlus" id="A6H5Y3"/>
<dbReference type="SwissPalm" id="A6H5Y3"/>
<dbReference type="PaxDb" id="10090-ENSMUSP00000097442"/>
<dbReference type="PeptideAtlas" id="A6H5Y3"/>
<dbReference type="ProteomicsDB" id="252541"/>
<dbReference type="Pumba" id="A6H5Y3"/>
<dbReference type="Antibodypedia" id="20817">
    <property type="antibodies" value="148 antibodies from 29 providers"/>
</dbReference>
<dbReference type="Ensembl" id="ENSMUST00000099856.6">
    <property type="protein sequence ID" value="ENSMUSP00000097442.5"/>
    <property type="gene ID" value="ENSMUSG00000021311.10"/>
</dbReference>
<dbReference type="GeneID" id="238505"/>
<dbReference type="KEGG" id="mmu:238505"/>
<dbReference type="UCSC" id="uc007plh.2">
    <property type="organism name" value="mouse"/>
</dbReference>
<dbReference type="AGR" id="MGI:894292"/>
<dbReference type="CTD" id="4548"/>
<dbReference type="MGI" id="MGI:894292">
    <property type="gene designation" value="Mtr"/>
</dbReference>
<dbReference type="VEuPathDB" id="HostDB:ENSMUSG00000021311"/>
<dbReference type="eggNOG" id="KOG1579">
    <property type="taxonomic scope" value="Eukaryota"/>
</dbReference>
<dbReference type="GeneTree" id="ENSGT00420000029824"/>
<dbReference type="HOGENOM" id="CLU_004914_2_0_1"/>
<dbReference type="InParanoid" id="A6H5Y3"/>
<dbReference type="OMA" id="ADCIAMS"/>
<dbReference type="OrthoDB" id="261426at2759"/>
<dbReference type="PhylomeDB" id="A6H5Y3"/>
<dbReference type="TreeFam" id="TF312829"/>
<dbReference type="Reactome" id="R-MMU-156581">
    <property type="pathway name" value="Methylation"/>
</dbReference>
<dbReference type="Reactome" id="R-MMU-1614635">
    <property type="pathway name" value="Sulfur amino acid metabolism"/>
</dbReference>
<dbReference type="Reactome" id="R-MMU-9013407">
    <property type="pathway name" value="RHOH GTPase cycle"/>
</dbReference>
<dbReference type="Reactome" id="R-MMU-9759218">
    <property type="pathway name" value="Cobalamin (Cbl) metabolism"/>
</dbReference>
<dbReference type="UniPathway" id="UPA00051">
    <property type="reaction ID" value="UER00081"/>
</dbReference>
<dbReference type="BioGRID-ORCS" id="238505">
    <property type="hits" value="18 hits in 79 CRISPR screens"/>
</dbReference>
<dbReference type="ChiTaRS" id="Mtr">
    <property type="organism name" value="mouse"/>
</dbReference>
<dbReference type="PRO" id="PR:A6H5Y3"/>
<dbReference type="Proteomes" id="UP000000589">
    <property type="component" value="Chromosome 13"/>
</dbReference>
<dbReference type="RNAct" id="A6H5Y3">
    <property type="molecule type" value="protein"/>
</dbReference>
<dbReference type="Bgee" id="ENSMUSG00000021311">
    <property type="expression patterns" value="Expressed in myocardium of ventricle and 227 other cell types or tissues"/>
</dbReference>
<dbReference type="ExpressionAtlas" id="A6H5Y3">
    <property type="expression patterns" value="baseline and differential"/>
</dbReference>
<dbReference type="GO" id="GO:0005737">
    <property type="term" value="C:cytoplasm"/>
    <property type="evidence" value="ECO:0007669"/>
    <property type="project" value="UniProtKB-SubCell"/>
</dbReference>
<dbReference type="GO" id="GO:0031419">
    <property type="term" value="F:cobalamin binding"/>
    <property type="evidence" value="ECO:0007669"/>
    <property type="project" value="UniProtKB-KW"/>
</dbReference>
<dbReference type="GO" id="GO:0008705">
    <property type="term" value="F:methionine synthase activity"/>
    <property type="evidence" value="ECO:0000315"/>
    <property type="project" value="MGI"/>
</dbReference>
<dbReference type="GO" id="GO:0008270">
    <property type="term" value="F:zinc ion binding"/>
    <property type="evidence" value="ECO:0007669"/>
    <property type="project" value="InterPro"/>
</dbReference>
<dbReference type="GO" id="GO:0031103">
    <property type="term" value="P:axon regeneration"/>
    <property type="evidence" value="ECO:0007669"/>
    <property type="project" value="Ensembl"/>
</dbReference>
<dbReference type="GO" id="GO:0071732">
    <property type="term" value="P:cellular response to nitric oxide"/>
    <property type="evidence" value="ECO:0007669"/>
    <property type="project" value="Ensembl"/>
</dbReference>
<dbReference type="GO" id="GO:0009235">
    <property type="term" value="P:cobalamin metabolic process"/>
    <property type="evidence" value="ECO:0000315"/>
    <property type="project" value="MGI"/>
</dbReference>
<dbReference type="GO" id="GO:0009086">
    <property type="term" value="P:methionine biosynthetic process"/>
    <property type="evidence" value="ECO:0000315"/>
    <property type="project" value="MGI"/>
</dbReference>
<dbReference type="GO" id="GO:0032259">
    <property type="term" value="P:methylation"/>
    <property type="evidence" value="ECO:0007669"/>
    <property type="project" value="UniProtKB-KW"/>
</dbReference>
<dbReference type="GO" id="GO:0042558">
    <property type="term" value="P:pteridine-containing compound metabolic process"/>
    <property type="evidence" value="ECO:0007669"/>
    <property type="project" value="InterPro"/>
</dbReference>
<dbReference type="CDD" id="cd02069">
    <property type="entry name" value="methionine_synthase_B12_BD"/>
    <property type="match status" value="1"/>
</dbReference>
<dbReference type="CDD" id="cd00740">
    <property type="entry name" value="MeTr"/>
    <property type="match status" value="1"/>
</dbReference>
<dbReference type="FunFam" id="1.10.1240.10:FF:000001">
    <property type="entry name" value="Methionine synthase"/>
    <property type="match status" value="1"/>
</dbReference>
<dbReference type="FunFam" id="3.20.20.20:FF:000002">
    <property type="entry name" value="Methionine synthase"/>
    <property type="match status" value="1"/>
</dbReference>
<dbReference type="FunFam" id="3.20.20.330:FF:000001">
    <property type="entry name" value="Methionine synthase"/>
    <property type="match status" value="1"/>
</dbReference>
<dbReference type="FunFam" id="3.40.50.280:FF:000001">
    <property type="entry name" value="Methionine synthase"/>
    <property type="match status" value="1"/>
</dbReference>
<dbReference type="Gene3D" id="3.40.50.280">
    <property type="entry name" value="Cobalamin-binding domain"/>
    <property type="match status" value="1"/>
</dbReference>
<dbReference type="Gene3D" id="1.10.288.10">
    <property type="entry name" value="Cobalamin-dependent Methionine Synthase, domain 2"/>
    <property type="match status" value="1"/>
</dbReference>
<dbReference type="Gene3D" id="3.20.20.20">
    <property type="entry name" value="Dihydropteroate synthase-like"/>
    <property type="match status" value="1"/>
</dbReference>
<dbReference type="Gene3D" id="3.20.20.330">
    <property type="entry name" value="Homocysteine-binding-like domain"/>
    <property type="match status" value="1"/>
</dbReference>
<dbReference type="Gene3D" id="1.10.1240.10">
    <property type="entry name" value="Methionine synthase domain"/>
    <property type="match status" value="1"/>
</dbReference>
<dbReference type="Gene3D" id="3.10.196.10">
    <property type="entry name" value="Vitamin B12-dependent methionine synthase, activation domain"/>
    <property type="match status" value="1"/>
</dbReference>
<dbReference type="InterPro" id="IPR003759">
    <property type="entry name" value="Cbl-bd_cap"/>
</dbReference>
<dbReference type="InterPro" id="IPR006158">
    <property type="entry name" value="Cobalamin-bd"/>
</dbReference>
<dbReference type="InterPro" id="IPR036724">
    <property type="entry name" value="Cobalamin-bd_sf"/>
</dbReference>
<dbReference type="InterPro" id="IPR011005">
    <property type="entry name" value="Dihydropteroate_synth-like_sf"/>
</dbReference>
<dbReference type="InterPro" id="IPR003726">
    <property type="entry name" value="HCY_dom"/>
</dbReference>
<dbReference type="InterPro" id="IPR036589">
    <property type="entry name" value="HCY_dom_sf"/>
</dbReference>
<dbReference type="InterPro" id="IPR050554">
    <property type="entry name" value="Met_Synthase/Corrinoid"/>
</dbReference>
<dbReference type="InterPro" id="IPR033706">
    <property type="entry name" value="Met_synthase_B12-bd"/>
</dbReference>
<dbReference type="InterPro" id="IPR011822">
    <property type="entry name" value="MetH"/>
</dbReference>
<dbReference type="InterPro" id="IPR036594">
    <property type="entry name" value="Meth_synthase_dom"/>
</dbReference>
<dbReference type="InterPro" id="IPR000489">
    <property type="entry name" value="Pterin-binding_dom"/>
</dbReference>
<dbReference type="InterPro" id="IPR004223">
    <property type="entry name" value="VitB12-dep_Met_synth_activ_dom"/>
</dbReference>
<dbReference type="InterPro" id="IPR037010">
    <property type="entry name" value="VitB12-dep_Met_synth_activ_sf"/>
</dbReference>
<dbReference type="NCBIfam" id="TIGR02082">
    <property type="entry name" value="metH"/>
    <property type="match status" value="1"/>
</dbReference>
<dbReference type="NCBIfam" id="NF007024">
    <property type="entry name" value="PRK09490.1"/>
    <property type="match status" value="1"/>
</dbReference>
<dbReference type="PANTHER" id="PTHR45833">
    <property type="entry name" value="METHIONINE SYNTHASE"/>
    <property type="match status" value="1"/>
</dbReference>
<dbReference type="PANTHER" id="PTHR45833:SF1">
    <property type="entry name" value="METHIONINE SYNTHASE"/>
    <property type="match status" value="1"/>
</dbReference>
<dbReference type="Pfam" id="PF02310">
    <property type="entry name" value="B12-binding"/>
    <property type="match status" value="1"/>
</dbReference>
<dbReference type="Pfam" id="PF02607">
    <property type="entry name" value="B12-binding_2"/>
    <property type="match status" value="1"/>
</dbReference>
<dbReference type="Pfam" id="PF02965">
    <property type="entry name" value="Met_synt_B12"/>
    <property type="match status" value="1"/>
</dbReference>
<dbReference type="Pfam" id="PF00809">
    <property type="entry name" value="Pterin_bind"/>
    <property type="match status" value="1"/>
</dbReference>
<dbReference type="Pfam" id="PF02574">
    <property type="entry name" value="S-methyl_trans"/>
    <property type="match status" value="1"/>
</dbReference>
<dbReference type="PIRSF" id="PIRSF000381">
    <property type="entry name" value="MetH"/>
    <property type="match status" value="1"/>
</dbReference>
<dbReference type="SMART" id="SM01018">
    <property type="entry name" value="B12-binding_2"/>
    <property type="match status" value="1"/>
</dbReference>
<dbReference type="SUPFAM" id="SSF52242">
    <property type="entry name" value="Cobalamin (vitamin B12)-binding domain"/>
    <property type="match status" value="1"/>
</dbReference>
<dbReference type="SUPFAM" id="SSF51717">
    <property type="entry name" value="Dihydropteroate synthetase-like"/>
    <property type="match status" value="1"/>
</dbReference>
<dbReference type="SUPFAM" id="SSF82282">
    <property type="entry name" value="Homocysteine S-methyltransferase"/>
    <property type="match status" value="1"/>
</dbReference>
<dbReference type="SUPFAM" id="SSF56507">
    <property type="entry name" value="Methionine synthase activation domain-like"/>
    <property type="match status" value="1"/>
</dbReference>
<dbReference type="SUPFAM" id="SSF47644">
    <property type="entry name" value="Methionine synthase domain"/>
    <property type="match status" value="1"/>
</dbReference>
<dbReference type="PROSITE" id="PS50974">
    <property type="entry name" value="ADOMET_ACTIVATION"/>
    <property type="match status" value="1"/>
</dbReference>
<dbReference type="PROSITE" id="PS51332">
    <property type="entry name" value="B12_BINDING"/>
    <property type="match status" value="1"/>
</dbReference>
<dbReference type="PROSITE" id="PS51337">
    <property type="entry name" value="B12_BINDING_NTER"/>
    <property type="match status" value="1"/>
</dbReference>
<dbReference type="PROSITE" id="PS50970">
    <property type="entry name" value="HCY"/>
    <property type="match status" value="1"/>
</dbReference>
<dbReference type="PROSITE" id="PS50972">
    <property type="entry name" value="PTERIN_BINDING"/>
    <property type="match status" value="1"/>
</dbReference>
<protein>
    <recommendedName>
        <fullName>Methionine synthase</fullName>
        <shortName>MS</shortName>
        <ecNumber evidence="3">2.1.1.13</ecNumber>
    </recommendedName>
    <alternativeName>
        <fullName>5-methyltetrahydrofolate--homocysteine methyltransferase</fullName>
    </alternativeName>
    <alternativeName>
        <fullName>Cobalamin-dependent methionine synthase</fullName>
    </alternativeName>
    <alternativeName>
        <fullName>Vitamin-B12 dependent methionine synthase</fullName>
    </alternativeName>
</protein>
<keyword id="KW-0028">Amino-acid biosynthesis</keyword>
<keyword id="KW-0846">Cobalamin</keyword>
<keyword id="KW-0170">Cobalt</keyword>
<keyword id="KW-0963">Cytoplasm</keyword>
<keyword id="KW-0479">Metal-binding</keyword>
<keyword id="KW-0486">Methionine biosynthesis</keyword>
<keyword id="KW-0489">Methyltransferase</keyword>
<keyword id="KW-0597">Phosphoprotein</keyword>
<keyword id="KW-1185">Reference proteome</keyword>
<keyword id="KW-0677">Repeat</keyword>
<keyword id="KW-0949">S-adenosyl-L-methionine</keyword>
<keyword id="KW-0808">Transferase</keyword>
<keyword id="KW-0862">Zinc</keyword>
<comment type="function">
    <text evidence="2">Catalyzes the transfer of a methyl group from methylcob(III)alamin (MeCbl) to homocysteine, yielding enzyme-bound cob(I)alamin and methionine in the cytosol. MeCbl is an active form of cobalamin (vitamin B12) used as a cofactor for methionine biosynthesis. Cob(I)alamin form is regenerated to MeCbl by a transfer of a methyl group from 5-methyltetrahydrofolate. The processing of cobalamin in the cytosol occurs in a multiprotein complex composed of at least MMACHC, MMADHC, MTRR (methionine synthase reductase) and MTR which may contribute to shuttle safely and efficiently cobalamin towards MTR in order to produce methionine.</text>
</comment>
<comment type="catalytic activity">
    <reaction evidence="3">
        <text>(6S)-5-methyl-5,6,7,8-tetrahydrofolate + L-homocysteine = (6S)-5,6,7,8-tetrahydrofolate + L-methionine</text>
        <dbReference type="Rhea" id="RHEA:11172"/>
        <dbReference type="ChEBI" id="CHEBI:18608"/>
        <dbReference type="ChEBI" id="CHEBI:57453"/>
        <dbReference type="ChEBI" id="CHEBI:57844"/>
        <dbReference type="ChEBI" id="CHEBI:58199"/>
        <dbReference type="EC" id="2.1.1.13"/>
    </reaction>
    <physiologicalReaction direction="left-to-right" evidence="3">
        <dbReference type="Rhea" id="RHEA:11173"/>
    </physiologicalReaction>
</comment>
<comment type="cofactor">
    <cofactor evidence="1">
        <name>methylcob(III)alamin</name>
        <dbReference type="ChEBI" id="CHEBI:28115"/>
    </cofactor>
</comment>
<comment type="cofactor">
    <cofactor evidence="1">
        <name>Zn(2+)</name>
        <dbReference type="ChEBI" id="CHEBI:29105"/>
    </cofactor>
    <text evidence="1">Binds 1 zinc ion per subunit.</text>
</comment>
<comment type="pathway">
    <text evidence="3">Amino-acid biosynthesis; L-methionine biosynthesis via de novo pathway; L-methionine from L-homocysteine (MetH route): step 1/1.</text>
</comment>
<comment type="subunit">
    <text evidence="2">Monomer. Dimer. Forms a multiprotein complex with MMACHC, MMADHC and MTRR.</text>
</comment>
<comment type="subcellular location">
    <subcellularLocation>
        <location evidence="2">Cytoplasm</location>
    </subcellularLocation>
</comment>
<comment type="domain">
    <text evidence="1">Modular enzyme with four functionally distinct domains. The isolated Hcy-binding domain catalyzes methyl transfer from free methylcobalamin to homocysteine. The Hcy-binding domain in association with the pterin-binding domain catalyzes the methylation of cob(I)alamin by methyltetrahydrofolate and the methylation of homocysteine. The B12-binding domain binds the cofactor. The AdoMet activation domain binds S-adenosyl-L-methionine. Under aerobic conditions cob(I)alamin can be converted to inactive cob(II)alamin. Reductive methylation by S-adenosyl-L-methionine and flavodoxin regenerates methylcobalamin (By similarity).</text>
</comment>
<comment type="similarity">
    <text evidence="9">Belongs to the vitamin-B12 dependent methionine synthase family.</text>
</comment>
<evidence type="ECO:0000250" key="1">
    <source>
        <dbReference type="UniProtKB" id="P13009"/>
    </source>
</evidence>
<evidence type="ECO:0000250" key="2">
    <source>
        <dbReference type="UniProtKB" id="Q99707"/>
    </source>
</evidence>
<evidence type="ECO:0000250" key="3">
    <source>
        <dbReference type="UniProtKB" id="Q9Z2Q4"/>
    </source>
</evidence>
<evidence type="ECO:0000255" key="4">
    <source>
        <dbReference type="PROSITE-ProRule" id="PRU00333"/>
    </source>
</evidence>
<evidence type="ECO:0000255" key="5">
    <source>
        <dbReference type="PROSITE-ProRule" id="PRU00334"/>
    </source>
</evidence>
<evidence type="ECO:0000255" key="6">
    <source>
        <dbReference type="PROSITE-ProRule" id="PRU00346"/>
    </source>
</evidence>
<evidence type="ECO:0000255" key="7">
    <source>
        <dbReference type="PROSITE-ProRule" id="PRU00666"/>
    </source>
</evidence>
<evidence type="ECO:0000255" key="8">
    <source>
        <dbReference type="PROSITE-ProRule" id="PRU00667"/>
    </source>
</evidence>
<evidence type="ECO:0000305" key="9"/>
<evidence type="ECO:0000312" key="10">
    <source>
        <dbReference type="MGI" id="MGI:894292"/>
    </source>
</evidence>
<accession>A6H5Y3</accession>
<accession>Q3UQP2</accession>